<sequence>MGYLDLALSYSNQPQTVEAPASGGGLSQNGKFSYGYASSAGKRSSMEDFFETRIDGINGEIVGLFGVFDGHGGARAAEYVKRHLFSNLITHPKFISDTKSAITDAYNHTDSELLKSENSHNRDAGSTASTAILVGDRLVVANVGDSRAVISRGGKAIAVSRDHKPDQSDERERIENAGGFVMWAGTWRVGGVLAVSRAFGDRLLKQYVVADPEIQEEKIDDTLEFLILASDGLWDVFSNEAAVAMVKEVEDPEDSAKKLVGEAIKRGSADNITCVVVRFLEKKSASSSHISSSSSKEAKEMPPLGDLAISSNEAKQVQIGSGNKPENVTNRKPDTASRSTDTLTLERNSVTDKV</sequence>
<reference key="1">
    <citation type="journal article" date="2000" name="Nature">
        <title>Sequence and analysis of chromosome 5 of the plant Arabidopsis thaliana.</title>
        <authorList>
            <person name="Tabata S."/>
            <person name="Kaneko T."/>
            <person name="Nakamura Y."/>
            <person name="Kotani H."/>
            <person name="Kato T."/>
            <person name="Asamizu E."/>
            <person name="Miyajima N."/>
            <person name="Sasamoto S."/>
            <person name="Kimura T."/>
            <person name="Hosouchi T."/>
            <person name="Kawashima K."/>
            <person name="Kohara M."/>
            <person name="Matsumoto M."/>
            <person name="Matsuno A."/>
            <person name="Muraki A."/>
            <person name="Nakayama S."/>
            <person name="Nakazaki N."/>
            <person name="Naruo K."/>
            <person name="Okumura S."/>
            <person name="Shinpo S."/>
            <person name="Takeuchi C."/>
            <person name="Wada T."/>
            <person name="Watanabe A."/>
            <person name="Yamada M."/>
            <person name="Yasuda M."/>
            <person name="Sato S."/>
            <person name="de la Bastide M."/>
            <person name="Huang E."/>
            <person name="Spiegel L."/>
            <person name="Gnoj L."/>
            <person name="O'Shaughnessy A."/>
            <person name="Preston R."/>
            <person name="Habermann K."/>
            <person name="Murray J."/>
            <person name="Johnson D."/>
            <person name="Rohlfing T."/>
            <person name="Nelson J."/>
            <person name="Stoneking T."/>
            <person name="Pepin K."/>
            <person name="Spieth J."/>
            <person name="Sekhon M."/>
            <person name="Armstrong J."/>
            <person name="Becker M."/>
            <person name="Belter E."/>
            <person name="Cordum H."/>
            <person name="Cordes M."/>
            <person name="Courtney L."/>
            <person name="Courtney W."/>
            <person name="Dante M."/>
            <person name="Du H."/>
            <person name="Edwards J."/>
            <person name="Fryman J."/>
            <person name="Haakensen B."/>
            <person name="Lamar E."/>
            <person name="Latreille P."/>
            <person name="Leonard S."/>
            <person name="Meyer R."/>
            <person name="Mulvaney E."/>
            <person name="Ozersky P."/>
            <person name="Riley A."/>
            <person name="Strowmatt C."/>
            <person name="Wagner-McPherson C."/>
            <person name="Wollam A."/>
            <person name="Yoakum M."/>
            <person name="Bell M."/>
            <person name="Dedhia N."/>
            <person name="Parnell L."/>
            <person name="Shah R."/>
            <person name="Rodriguez M."/>
            <person name="Hoon See L."/>
            <person name="Vil D."/>
            <person name="Baker J."/>
            <person name="Kirchoff K."/>
            <person name="Toth K."/>
            <person name="King L."/>
            <person name="Bahret A."/>
            <person name="Miller B."/>
            <person name="Marra M.A."/>
            <person name="Martienssen R."/>
            <person name="McCombie W.R."/>
            <person name="Wilson R.K."/>
            <person name="Murphy G."/>
            <person name="Bancroft I."/>
            <person name="Volckaert G."/>
            <person name="Wambutt R."/>
            <person name="Duesterhoeft A."/>
            <person name="Stiekema W."/>
            <person name="Pohl T."/>
            <person name="Entian K.-D."/>
            <person name="Terryn N."/>
            <person name="Hartley N."/>
            <person name="Bent E."/>
            <person name="Johnson S."/>
            <person name="Langham S.-A."/>
            <person name="McCullagh B."/>
            <person name="Robben J."/>
            <person name="Grymonprez B."/>
            <person name="Zimmermann W."/>
            <person name="Ramsperger U."/>
            <person name="Wedler H."/>
            <person name="Balke K."/>
            <person name="Wedler E."/>
            <person name="Peters S."/>
            <person name="van Staveren M."/>
            <person name="Dirkse W."/>
            <person name="Mooijman P."/>
            <person name="Klein Lankhorst R."/>
            <person name="Weitzenegger T."/>
            <person name="Bothe G."/>
            <person name="Rose M."/>
            <person name="Hauf J."/>
            <person name="Berneiser S."/>
            <person name="Hempel S."/>
            <person name="Feldpausch M."/>
            <person name="Lamberth S."/>
            <person name="Villarroel R."/>
            <person name="Gielen J."/>
            <person name="Ardiles W."/>
            <person name="Bents O."/>
            <person name="Lemcke K."/>
            <person name="Kolesov G."/>
            <person name="Mayer K.F.X."/>
            <person name="Rudd S."/>
            <person name="Schoof H."/>
            <person name="Schueller C."/>
            <person name="Zaccaria P."/>
            <person name="Mewes H.-W."/>
            <person name="Bevan M."/>
            <person name="Fransz P.F."/>
        </authorList>
    </citation>
    <scope>NUCLEOTIDE SEQUENCE [LARGE SCALE GENOMIC DNA]</scope>
    <source>
        <strain>cv. Columbia</strain>
    </source>
</reference>
<reference key="2">
    <citation type="journal article" date="2017" name="Plant J.">
        <title>Araport11: a complete reannotation of the Arabidopsis thaliana reference genome.</title>
        <authorList>
            <person name="Cheng C.Y."/>
            <person name="Krishnakumar V."/>
            <person name="Chan A.P."/>
            <person name="Thibaud-Nissen F."/>
            <person name="Schobel S."/>
            <person name="Town C.D."/>
        </authorList>
    </citation>
    <scope>GENOME REANNOTATION</scope>
    <source>
        <strain>cv. Columbia</strain>
    </source>
</reference>
<reference key="3">
    <citation type="journal article" date="2002" name="Science">
        <title>Functional annotation of a full-length Arabidopsis cDNA collection.</title>
        <authorList>
            <person name="Seki M."/>
            <person name="Narusaka M."/>
            <person name="Kamiya A."/>
            <person name="Ishida J."/>
            <person name="Satou M."/>
            <person name="Sakurai T."/>
            <person name="Nakajima M."/>
            <person name="Enju A."/>
            <person name="Akiyama K."/>
            <person name="Oono Y."/>
            <person name="Muramatsu M."/>
            <person name="Hayashizaki Y."/>
            <person name="Kawai J."/>
            <person name="Carninci P."/>
            <person name="Itoh M."/>
            <person name="Ishii Y."/>
            <person name="Arakawa T."/>
            <person name="Shibata K."/>
            <person name="Shinagawa A."/>
            <person name="Shinozaki K."/>
        </authorList>
    </citation>
    <scope>NUCLEOTIDE SEQUENCE [LARGE SCALE MRNA]</scope>
    <source>
        <strain>cv. Columbia</strain>
    </source>
</reference>
<reference key="4">
    <citation type="journal article" date="2003" name="Science">
        <title>Empirical analysis of transcriptional activity in the Arabidopsis genome.</title>
        <authorList>
            <person name="Yamada K."/>
            <person name="Lim J."/>
            <person name="Dale J.M."/>
            <person name="Chen H."/>
            <person name="Shinn P."/>
            <person name="Palm C.J."/>
            <person name="Southwick A.M."/>
            <person name="Wu H.C."/>
            <person name="Kim C.J."/>
            <person name="Nguyen M."/>
            <person name="Pham P.K."/>
            <person name="Cheuk R.F."/>
            <person name="Karlin-Newmann G."/>
            <person name="Liu S.X."/>
            <person name="Lam B."/>
            <person name="Sakano H."/>
            <person name="Wu T."/>
            <person name="Yu G."/>
            <person name="Miranda M."/>
            <person name="Quach H.L."/>
            <person name="Tripp M."/>
            <person name="Chang C.H."/>
            <person name="Lee J.M."/>
            <person name="Toriumi M.J."/>
            <person name="Chan M.M."/>
            <person name="Tang C.C."/>
            <person name="Onodera C.S."/>
            <person name="Deng J.M."/>
            <person name="Akiyama K."/>
            <person name="Ansari Y."/>
            <person name="Arakawa T."/>
            <person name="Banh J."/>
            <person name="Banno F."/>
            <person name="Bowser L."/>
            <person name="Brooks S.Y."/>
            <person name="Carninci P."/>
            <person name="Chao Q."/>
            <person name="Choy N."/>
            <person name="Enju A."/>
            <person name="Goldsmith A.D."/>
            <person name="Gurjal M."/>
            <person name="Hansen N.F."/>
            <person name="Hayashizaki Y."/>
            <person name="Johnson-Hopson C."/>
            <person name="Hsuan V.W."/>
            <person name="Iida K."/>
            <person name="Karnes M."/>
            <person name="Khan S."/>
            <person name="Koesema E."/>
            <person name="Ishida J."/>
            <person name="Jiang P.X."/>
            <person name="Jones T."/>
            <person name="Kawai J."/>
            <person name="Kamiya A."/>
            <person name="Meyers C."/>
            <person name="Nakajima M."/>
            <person name="Narusaka M."/>
            <person name="Seki M."/>
            <person name="Sakurai T."/>
            <person name="Satou M."/>
            <person name="Tamse R."/>
            <person name="Vaysberg M."/>
            <person name="Wallender E.K."/>
            <person name="Wong C."/>
            <person name="Yamamura Y."/>
            <person name="Yuan S."/>
            <person name="Shinozaki K."/>
            <person name="Davis R.W."/>
            <person name="Theologis A."/>
            <person name="Ecker J.R."/>
        </authorList>
    </citation>
    <scope>NUCLEOTIDE SEQUENCE [LARGE SCALE MRNA]</scope>
    <source>
        <strain>cv. Columbia</strain>
    </source>
</reference>
<reference key="5">
    <citation type="submission" date="2002-03" db="EMBL/GenBank/DDBJ databases">
        <title>Full-length cDNA from Arabidopsis thaliana.</title>
        <authorList>
            <person name="Brover V.V."/>
            <person name="Troukhan M.E."/>
            <person name="Alexandrov N.A."/>
            <person name="Lu Y.-P."/>
            <person name="Flavell R.B."/>
            <person name="Feldmann K.A."/>
        </authorList>
    </citation>
    <scope>NUCLEOTIDE SEQUENCE [LARGE SCALE MRNA]</scope>
</reference>
<reference key="6">
    <citation type="journal article" date="2008" name="BMC Genomics">
        <title>Genome-wide and expression analysis of protein phosphatase 2C in rice and Arabidopsis.</title>
        <authorList>
            <person name="Xue T."/>
            <person name="Wang D."/>
            <person name="Zhang S."/>
            <person name="Ehlting J."/>
            <person name="Ni F."/>
            <person name="Jacab S."/>
            <person name="Zheng C."/>
            <person name="Zhong Y."/>
        </authorList>
    </citation>
    <scope>GENE FAMILY</scope>
    <scope>NOMENCLATURE</scope>
</reference>
<gene>
    <name type="ordered locus">At5g10740</name>
    <name type="ORF">MAJ23.3</name>
    <name type="ORF">T30N20.10</name>
</gene>
<accession>Q8LAY8</accession>
<accession>Q9LEW5</accession>
<protein>
    <recommendedName>
        <fullName>Probable protein phosphatase 2C 69</fullName>
        <shortName>AtPP2C69</shortName>
        <ecNumber>3.1.3.16</ecNumber>
    </recommendedName>
</protein>
<dbReference type="EC" id="3.1.3.16"/>
<dbReference type="EMBL" id="AL365234">
    <property type="protein sequence ID" value="CAB96829.1"/>
    <property type="status" value="ALT_SEQ"/>
    <property type="molecule type" value="Genomic_DNA"/>
</dbReference>
<dbReference type="EMBL" id="CP002688">
    <property type="protein sequence ID" value="AED91590.1"/>
    <property type="molecule type" value="Genomic_DNA"/>
</dbReference>
<dbReference type="EMBL" id="CP002688">
    <property type="protein sequence ID" value="ANM69757.1"/>
    <property type="molecule type" value="Genomic_DNA"/>
</dbReference>
<dbReference type="EMBL" id="AK117549">
    <property type="protein sequence ID" value="BAC42210.1"/>
    <property type="molecule type" value="mRNA"/>
</dbReference>
<dbReference type="EMBL" id="BT005431">
    <property type="protein sequence ID" value="AAO63851.1"/>
    <property type="molecule type" value="mRNA"/>
</dbReference>
<dbReference type="EMBL" id="AY087522">
    <property type="protein sequence ID" value="AAM65064.1"/>
    <property type="molecule type" value="mRNA"/>
</dbReference>
<dbReference type="PIR" id="T50783">
    <property type="entry name" value="T50783"/>
</dbReference>
<dbReference type="RefSeq" id="NP_001331413.1">
    <property type="nucleotide sequence ID" value="NM_001343134.1"/>
</dbReference>
<dbReference type="RefSeq" id="NP_568237.1">
    <property type="nucleotide sequence ID" value="NM_121112.5"/>
</dbReference>
<dbReference type="SMR" id="Q8LAY8"/>
<dbReference type="BioGRID" id="16219">
    <property type="interactions" value="2"/>
</dbReference>
<dbReference type="FunCoup" id="Q8LAY8">
    <property type="interactions" value="1343"/>
</dbReference>
<dbReference type="IntAct" id="Q8LAY8">
    <property type="interactions" value="1"/>
</dbReference>
<dbReference type="MINT" id="Q8LAY8"/>
<dbReference type="PaxDb" id="3702-AT5G10740.1"/>
<dbReference type="ProteomicsDB" id="250912"/>
<dbReference type="EnsemblPlants" id="AT5G10740.1">
    <property type="protein sequence ID" value="AT5G10740.1"/>
    <property type="gene ID" value="AT5G10740"/>
</dbReference>
<dbReference type="EnsemblPlants" id="AT5G10740.2">
    <property type="protein sequence ID" value="AT5G10740.2"/>
    <property type="gene ID" value="AT5G10740"/>
</dbReference>
<dbReference type="GeneID" id="830941"/>
<dbReference type="Gramene" id="AT5G10740.1">
    <property type="protein sequence ID" value="AT5G10740.1"/>
    <property type="gene ID" value="AT5G10740"/>
</dbReference>
<dbReference type="Gramene" id="AT5G10740.2">
    <property type="protein sequence ID" value="AT5G10740.2"/>
    <property type="gene ID" value="AT5G10740"/>
</dbReference>
<dbReference type="KEGG" id="ath:AT5G10740"/>
<dbReference type="Araport" id="AT5G10740"/>
<dbReference type="TAIR" id="AT5G10740"/>
<dbReference type="eggNOG" id="KOG0698">
    <property type="taxonomic scope" value="Eukaryota"/>
</dbReference>
<dbReference type="HOGENOM" id="CLU_013173_0_6_1"/>
<dbReference type="InParanoid" id="Q8LAY8"/>
<dbReference type="OMA" id="QHENWPR"/>
<dbReference type="PhylomeDB" id="Q8LAY8"/>
<dbReference type="PRO" id="PR:Q8LAY8"/>
<dbReference type="Proteomes" id="UP000006548">
    <property type="component" value="Chromosome 5"/>
</dbReference>
<dbReference type="ExpressionAtlas" id="Q8LAY8">
    <property type="expression patterns" value="baseline and differential"/>
</dbReference>
<dbReference type="GO" id="GO:0005886">
    <property type="term" value="C:plasma membrane"/>
    <property type="evidence" value="ECO:0007005"/>
    <property type="project" value="TAIR"/>
</dbReference>
<dbReference type="GO" id="GO:0046872">
    <property type="term" value="F:metal ion binding"/>
    <property type="evidence" value="ECO:0007669"/>
    <property type="project" value="UniProtKB-KW"/>
</dbReference>
<dbReference type="GO" id="GO:0004722">
    <property type="term" value="F:protein serine/threonine phosphatase activity"/>
    <property type="evidence" value="ECO:0007669"/>
    <property type="project" value="UniProtKB-EC"/>
</dbReference>
<dbReference type="CDD" id="cd00143">
    <property type="entry name" value="PP2Cc"/>
    <property type="match status" value="1"/>
</dbReference>
<dbReference type="FunFam" id="3.60.40.10:FF:000011">
    <property type="entry name" value="probable protein phosphatase 2C 59"/>
    <property type="match status" value="1"/>
</dbReference>
<dbReference type="Gene3D" id="3.60.40.10">
    <property type="entry name" value="PPM-type phosphatase domain"/>
    <property type="match status" value="1"/>
</dbReference>
<dbReference type="InterPro" id="IPR015655">
    <property type="entry name" value="PP2C"/>
</dbReference>
<dbReference type="InterPro" id="IPR000222">
    <property type="entry name" value="PP2C_BS"/>
</dbReference>
<dbReference type="InterPro" id="IPR036457">
    <property type="entry name" value="PPM-type-like_dom_sf"/>
</dbReference>
<dbReference type="InterPro" id="IPR001932">
    <property type="entry name" value="PPM-type_phosphatase-like_dom"/>
</dbReference>
<dbReference type="PANTHER" id="PTHR47992">
    <property type="entry name" value="PROTEIN PHOSPHATASE"/>
    <property type="match status" value="1"/>
</dbReference>
<dbReference type="Pfam" id="PF00481">
    <property type="entry name" value="PP2C"/>
    <property type="match status" value="1"/>
</dbReference>
<dbReference type="SMART" id="SM00331">
    <property type="entry name" value="PP2C_SIG"/>
    <property type="match status" value="1"/>
</dbReference>
<dbReference type="SMART" id="SM00332">
    <property type="entry name" value="PP2Cc"/>
    <property type="match status" value="1"/>
</dbReference>
<dbReference type="SUPFAM" id="SSF81606">
    <property type="entry name" value="PP2C-like"/>
    <property type="match status" value="1"/>
</dbReference>
<dbReference type="PROSITE" id="PS01032">
    <property type="entry name" value="PPM_1"/>
    <property type="match status" value="1"/>
</dbReference>
<dbReference type="PROSITE" id="PS51746">
    <property type="entry name" value="PPM_2"/>
    <property type="match status" value="1"/>
</dbReference>
<proteinExistence type="evidence at transcript level"/>
<name>P2C69_ARATH</name>
<evidence type="ECO:0000250" key="1"/>
<evidence type="ECO:0000255" key="2">
    <source>
        <dbReference type="PROSITE-ProRule" id="PRU01082"/>
    </source>
</evidence>
<evidence type="ECO:0000256" key="3">
    <source>
        <dbReference type="SAM" id="MobiDB-lite"/>
    </source>
</evidence>
<evidence type="ECO:0000305" key="4"/>
<comment type="catalytic activity">
    <reaction>
        <text>O-phospho-L-seryl-[protein] + H2O = L-seryl-[protein] + phosphate</text>
        <dbReference type="Rhea" id="RHEA:20629"/>
        <dbReference type="Rhea" id="RHEA-COMP:9863"/>
        <dbReference type="Rhea" id="RHEA-COMP:11604"/>
        <dbReference type="ChEBI" id="CHEBI:15377"/>
        <dbReference type="ChEBI" id="CHEBI:29999"/>
        <dbReference type="ChEBI" id="CHEBI:43474"/>
        <dbReference type="ChEBI" id="CHEBI:83421"/>
        <dbReference type="EC" id="3.1.3.16"/>
    </reaction>
</comment>
<comment type="catalytic activity">
    <reaction>
        <text>O-phospho-L-threonyl-[protein] + H2O = L-threonyl-[protein] + phosphate</text>
        <dbReference type="Rhea" id="RHEA:47004"/>
        <dbReference type="Rhea" id="RHEA-COMP:11060"/>
        <dbReference type="Rhea" id="RHEA-COMP:11605"/>
        <dbReference type="ChEBI" id="CHEBI:15377"/>
        <dbReference type="ChEBI" id="CHEBI:30013"/>
        <dbReference type="ChEBI" id="CHEBI:43474"/>
        <dbReference type="ChEBI" id="CHEBI:61977"/>
        <dbReference type="EC" id="3.1.3.16"/>
    </reaction>
</comment>
<comment type="cofactor">
    <cofactor evidence="1">
        <name>Mg(2+)</name>
        <dbReference type="ChEBI" id="CHEBI:18420"/>
    </cofactor>
    <cofactor evidence="1">
        <name>Mn(2+)</name>
        <dbReference type="ChEBI" id="CHEBI:29035"/>
    </cofactor>
    <text evidence="1">Binds 2 magnesium or manganese ions per subunit.</text>
</comment>
<comment type="similarity">
    <text evidence="4">Belongs to the PP2C family.</text>
</comment>
<comment type="sequence caution" evidence="4">
    <conflict type="erroneous gene model prediction">
        <sequence resource="EMBL-CDS" id="CAB96829"/>
    </conflict>
</comment>
<feature type="chain" id="PRO_0000367990" description="Probable protein phosphatase 2C 69">
    <location>
        <begin position="1"/>
        <end position="354"/>
    </location>
</feature>
<feature type="domain" description="PPM-type phosphatase" evidence="2">
    <location>
        <begin position="33"/>
        <end position="279"/>
    </location>
</feature>
<feature type="region of interest" description="Disordered" evidence="3">
    <location>
        <begin position="289"/>
        <end position="354"/>
    </location>
</feature>
<feature type="compositionally biased region" description="Polar residues" evidence="3">
    <location>
        <begin position="309"/>
        <end position="328"/>
    </location>
</feature>
<feature type="compositionally biased region" description="Polar residues" evidence="3">
    <location>
        <begin position="336"/>
        <end position="348"/>
    </location>
</feature>
<feature type="binding site" evidence="1">
    <location>
        <position position="69"/>
    </location>
    <ligand>
        <name>Mn(2+)</name>
        <dbReference type="ChEBI" id="CHEBI:29035"/>
        <label>1</label>
    </ligand>
</feature>
<feature type="binding site" evidence="1">
    <location>
        <position position="69"/>
    </location>
    <ligand>
        <name>Mn(2+)</name>
        <dbReference type="ChEBI" id="CHEBI:29035"/>
        <label>2</label>
    </ligand>
</feature>
<feature type="binding site" evidence="1">
    <location>
        <position position="70"/>
    </location>
    <ligand>
        <name>Mn(2+)</name>
        <dbReference type="ChEBI" id="CHEBI:29035"/>
        <label>1</label>
    </ligand>
</feature>
<feature type="binding site" evidence="1">
    <location>
        <position position="231"/>
    </location>
    <ligand>
        <name>Mn(2+)</name>
        <dbReference type="ChEBI" id="CHEBI:29035"/>
        <label>2</label>
    </ligand>
</feature>
<feature type="binding site" evidence="1">
    <location>
        <position position="270"/>
    </location>
    <ligand>
        <name>Mn(2+)</name>
        <dbReference type="ChEBI" id="CHEBI:29035"/>
        <label>2</label>
    </ligand>
</feature>
<organism>
    <name type="scientific">Arabidopsis thaliana</name>
    <name type="common">Mouse-ear cress</name>
    <dbReference type="NCBI Taxonomy" id="3702"/>
    <lineage>
        <taxon>Eukaryota</taxon>
        <taxon>Viridiplantae</taxon>
        <taxon>Streptophyta</taxon>
        <taxon>Embryophyta</taxon>
        <taxon>Tracheophyta</taxon>
        <taxon>Spermatophyta</taxon>
        <taxon>Magnoliopsida</taxon>
        <taxon>eudicotyledons</taxon>
        <taxon>Gunneridae</taxon>
        <taxon>Pentapetalae</taxon>
        <taxon>rosids</taxon>
        <taxon>malvids</taxon>
        <taxon>Brassicales</taxon>
        <taxon>Brassicaceae</taxon>
        <taxon>Camelineae</taxon>
        <taxon>Arabidopsis</taxon>
    </lineage>
</organism>
<keyword id="KW-0378">Hydrolase</keyword>
<keyword id="KW-0460">Magnesium</keyword>
<keyword id="KW-0464">Manganese</keyword>
<keyword id="KW-0479">Metal-binding</keyword>
<keyword id="KW-0904">Protein phosphatase</keyword>
<keyword id="KW-1185">Reference proteome</keyword>